<name>Y230_METJA</name>
<comment type="subcellular location">
    <subcellularLocation>
        <location evidence="2">Membrane</location>
        <topology evidence="2">Single-pass membrane protein</topology>
    </subcellularLocation>
</comment>
<gene>
    <name type="ordered locus">MJ0230</name>
</gene>
<reference key="1">
    <citation type="journal article" date="1996" name="Science">
        <title>Complete genome sequence of the methanogenic archaeon, Methanococcus jannaschii.</title>
        <authorList>
            <person name="Bult C.J."/>
            <person name="White O."/>
            <person name="Olsen G.J."/>
            <person name="Zhou L."/>
            <person name="Fleischmann R.D."/>
            <person name="Sutton G.G."/>
            <person name="Blake J.A."/>
            <person name="FitzGerald L.M."/>
            <person name="Clayton R.A."/>
            <person name="Gocayne J.D."/>
            <person name="Kerlavage A.R."/>
            <person name="Dougherty B.A."/>
            <person name="Tomb J.-F."/>
            <person name="Adams M.D."/>
            <person name="Reich C.I."/>
            <person name="Overbeek R."/>
            <person name="Kirkness E.F."/>
            <person name="Weinstock K.G."/>
            <person name="Merrick J.M."/>
            <person name="Glodek A."/>
            <person name="Scott J.L."/>
            <person name="Geoghagen N.S.M."/>
            <person name="Weidman J.F."/>
            <person name="Fuhrmann J.L."/>
            <person name="Nguyen D."/>
            <person name="Utterback T.R."/>
            <person name="Kelley J.M."/>
            <person name="Peterson J.D."/>
            <person name="Sadow P.W."/>
            <person name="Hanna M.C."/>
            <person name="Cotton M.D."/>
            <person name="Roberts K.M."/>
            <person name="Hurst M.A."/>
            <person name="Kaine B.P."/>
            <person name="Borodovsky M."/>
            <person name="Klenk H.-P."/>
            <person name="Fraser C.M."/>
            <person name="Smith H.O."/>
            <person name="Woese C.R."/>
            <person name="Venter J.C."/>
        </authorList>
    </citation>
    <scope>NUCLEOTIDE SEQUENCE [LARGE SCALE GENOMIC DNA]</scope>
    <source>
        <strain>ATCC 43067 / DSM 2661 / JAL-1 / JCM 10045 / NBRC 100440</strain>
    </source>
</reference>
<organism>
    <name type="scientific">Methanocaldococcus jannaschii (strain ATCC 43067 / DSM 2661 / JAL-1 / JCM 10045 / NBRC 100440)</name>
    <name type="common">Methanococcus jannaschii</name>
    <dbReference type="NCBI Taxonomy" id="243232"/>
    <lineage>
        <taxon>Archaea</taxon>
        <taxon>Methanobacteriati</taxon>
        <taxon>Methanobacteriota</taxon>
        <taxon>Methanomada group</taxon>
        <taxon>Methanococci</taxon>
        <taxon>Methanococcales</taxon>
        <taxon>Methanocaldococcaceae</taxon>
        <taxon>Methanocaldococcus</taxon>
    </lineage>
</organism>
<dbReference type="EMBL" id="L77117">
    <property type="protein sequence ID" value="AAB98216.1"/>
    <property type="molecule type" value="Genomic_DNA"/>
</dbReference>
<dbReference type="PIR" id="G64328">
    <property type="entry name" value="G64328"/>
</dbReference>
<dbReference type="SMR" id="Q57683"/>
<dbReference type="STRING" id="243232.MJ_0230"/>
<dbReference type="PaxDb" id="243232-MJ_0230"/>
<dbReference type="EnsemblBacteria" id="AAB98216">
    <property type="protein sequence ID" value="AAB98216"/>
    <property type="gene ID" value="MJ_0230"/>
</dbReference>
<dbReference type="KEGG" id="mja:MJ_0230"/>
<dbReference type="eggNOG" id="arCOG05236">
    <property type="taxonomic scope" value="Archaea"/>
</dbReference>
<dbReference type="HOGENOM" id="CLU_2476020_0_0_2"/>
<dbReference type="InParanoid" id="Q57683"/>
<dbReference type="Proteomes" id="UP000000805">
    <property type="component" value="Chromosome"/>
</dbReference>
<dbReference type="GO" id="GO:0016020">
    <property type="term" value="C:membrane"/>
    <property type="evidence" value="ECO:0007669"/>
    <property type="project" value="UniProtKB-SubCell"/>
</dbReference>
<protein>
    <recommendedName>
        <fullName>Uncharacterized protein MJ0230</fullName>
    </recommendedName>
</protein>
<accession>Q57683</accession>
<keyword id="KW-0472">Membrane</keyword>
<keyword id="KW-1185">Reference proteome</keyword>
<keyword id="KW-0812">Transmembrane</keyword>
<keyword id="KW-1133">Transmembrane helix</keyword>
<evidence type="ECO:0000255" key="1"/>
<evidence type="ECO:0000305" key="2"/>
<sequence>MFVGEIMPMGFGVHYVGSEGVAINPFYDILWMIIFVVIIAVIIYILISPLKKQSSSIDNEKLIKIEKDVEEIKEIVKELKKKWEEIE</sequence>
<proteinExistence type="predicted"/>
<feature type="chain" id="PRO_0000106751" description="Uncharacterized protein MJ0230">
    <location>
        <begin position="1"/>
        <end position="87"/>
    </location>
</feature>
<feature type="transmembrane region" description="Helical" evidence="1">
    <location>
        <begin position="29"/>
        <end position="49"/>
    </location>
</feature>